<proteinExistence type="inferred from homology"/>
<feature type="chain" id="PRO_0000146527" description="Small ribosomal subunit protein uS10">
    <location>
        <begin position="1"/>
        <end position="107"/>
    </location>
</feature>
<evidence type="ECO:0000255" key="1">
    <source>
        <dbReference type="HAMAP-Rule" id="MF_00508"/>
    </source>
</evidence>
<evidence type="ECO:0000305" key="2"/>
<organism>
    <name type="scientific">Deinococcus radiodurans (strain ATCC 13939 / DSM 20539 / JCM 16871 / CCUG 27074 / LMG 4051 / NBRC 15346 / NCIMB 9279 / VKM B-1422 / R1)</name>
    <dbReference type="NCBI Taxonomy" id="243230"/>
    <lineage>
        <taxon>Bacteria</taxon>
        <taxon>Thermotogati</taxon>
        <taxon>Deinococcota</taxon>
        <taxon>Deinococci</taxon>
        <taxon>Deinococcales</taxon>
        <taxon>Deinococcaceae</taxon>
        <taxon>Deinococcus</taxon>
    </lineage>
</organism>
<gene>
    <name evidence="1" type="primary">rpsJ</name>
    <name type="ordered locus">DR_0310</name>
</gene>
<name>RS10_DEIRA</name>
<accession>Q9RXK3</accession>
<dbReference type="EMBL" id="AE000513">
    <property type="protein sequence ID" value="AAF09891.1"/>
    <property type="molecule type" value="Genomic_DNA"/>
</dbReference>
<dbReference type="PIR" id="F75533">
    <property type="entry name" value="F75533"/>
</dbReference>
<dbReference type="RefSeq" id="NP_294033.1">
    <property type="nucleotide sequence ID" value="NC_001263.1"/>
</dbReference>
<dbReference type="RefSeq" id="WP_010886955.1">
    <property type="nucleotide sequence ID" value="NZ_JMLF01000001.1"/>
</dbReference>
<dbReference type="SMR" id="Q9RXK3"/>
<dbReference type="FunCoup" id="Q9RXK3">
    <property type="interactions" value="500"/>
</dbReference>
<dbReference type="STRING" id="243230.DR_0310"/>
<dbReference type="PaxDb" id="243230-DR_0310"/>
<dbReference type="EnsemblBacteria" id="AAF09891">
    <property type="protein sequence ID" value="AAF09891"/>
    <property type="gene ID" value="DR_0310"/>
</dbReference>
<dbReference type="GeneID" id="69516542"/>
<dbReference type="KEGG" id="dra:DR_0310"/>
<dbReference type="PATRIC" id="fig|243230.17.peg.476"/>
<dbReference type="eggNOG" id="COG0051">
    <property type="taxonomic scope" value="Bacteria"/>
</dbReference>
<dbReference type="HOGENOM" id="CLU_122625_1_3_0"/>
<dbReference type="InParanoid" id="Q9RXK3"/>
<dbReference type="OrthoDB" id="9804464at2"/>
<dbReference type="Proteomes" id="UP000002524">
    <property type="component" value="Chromosome 1"/>
</dbReference>
<dbReference type="GO" id="GO:0015935">
    <property type="term" value="C:small ribosomal subunit"/>
    <property type="evidence" value="ECO:0000318"/>
    <property type="project" value="GO_Central"/>
</dbReference>
<dbReference type="GO" id="GO:0003735">
    <property type="term" value="F:structural constituent of ribosome"/>
    <property type="evidence" value="ECO:0000318"/>
    <property type="project" value="GO_Central"/>
</dbReference>
<dbReference type="GO" id="GO:0000049">
    <property type="term" value="F:tRNA binding"/>
    <property type="evidence" value="ECO:0007669"/>
    <property type="project" value="UniProtKB-UniRule"/>
</dbReference>
<dbReference type="GO" id="GO:0006412">
    <property type="term" value="P:translation"/>
    <property type="evidence" value="ECO:0007669"/>
    <property type="project" value="UniProtKB-UniRule"/>
</dbReference>
<dbReference type="FunFam" id="3.30.70.600:FF:000009">
    <property type="entry name" value="30S ribosomal protein S10"/>
    <property type="match status" value="1"/>
</dbReference>
<dbReference type="Gene3D" id="3.30.70.600">
    <property type="entry name" value="Ribosomal protein S10 domain"/>
    <property type="match status" value="1"/>
</dbReference>
<dbReference type="HAMAP" id="MF_00508">
    <property type="entry name" value="Ribosomal_uS10"/>
    <property type="match status" value="1"/>
</dbReference>
<dbReference type="InterPro" id="IPR001848">
    <property type="entry name" value="Ribosomal_uS10"/>
</dbReference>
<dbReference type="InterPro" id="IPR018268">
    <property type="entry name" value="Ribosomal_uS10_CS"/>
</dbReference>
<dbReference type="InterPro" id="IPR027486">
    <property type="entry name" value="Ribosomal_uS10_dom"/>
</dbReference>
<dbReference type="InterPro" id="IPR036838">
    <property type="entry name" value="Ribosomal_uS10_dom_sf"/>
</dbReference>
<dbReference type="NCBIfam" id="NF001861">
    <property type="entry name" value="PRK00596.1"/>
    <property type="match status" value="1"/>
</dbReference>
<dbReference type="NCBIfam" id="TIGR01049">
    <property type="entry name" value="rpsJ_bact"/>
    <property type="match status" value="1"/>
</dbReference>
<dbReference type="PANTHER" id="PTHR11700">
    <property type="entry name" value="30S RIBOSOMAL PROTEIN S10 FAMILY MEMBER"/>
    <property type="match status" value="1"/>
</dbReference>
<dbReference type="Pfam" id="PF00338">
    <property type="entry name" value="Ribosomal_S10"/>
    <property type="match status" value="1"/>
</dbReference>
<dbReference type="PRINTS" id="PR00971">
    <property type="entry name" value="RIBOSOMALS10"/>
</dbReference>
<dbReference type="SMART" id="SM01403">
    <property type="entry name" value="Ribosomal_S10"/>
    <property type="match status" value="1"/>
</dbReference>
<dbReference type="SUPFAM" id="SSF54999">
    <property type="entry name" value="Ribosomal protein S10"/>
    <property type="match status" value="1"/>
</dbReference>
<dbReference type="PROSITE" id="PS00361">
    <property type="entry name" value="RIBOSOMAL_S10"/>
    <property type="match status" value="1"/>
</dbReference>
<reference key="1">
    <citation type="journal article" date="1999" name="Science">
        <title>Genome sequence of the radioresistant bacterium Deinococcus radiodurans R1.</title>
        <authorList>
            <person name="White O."/>
            <person name="Eisen J.A."/>
            <person name="Heidelberg J.F."/>
            <person name="Hickey E.K."/>
            <person name="Peterson J.D."/>
            <person name="Dodson R.J."/>
            <person name="Haft D.H."/>
            <person name="Gwinn M.L."/>
            <person name="Nelson W.C."/>
            <person name="Richardson D.L."/>
            <person name="Moffat K.S."/>
            <person name="Qin H."/>
            <person name="Jiang L."/>
            <person name="Pamphile W."/>
            <person name="Crosby M."/>
            <person name="Shen M."/>
            <person name="Vamathevan J.J."/>
            <person name="Lam P."/>
            <person name="McDonald L.A."/>
            <person name="Utterback T.R."/>
            <person name="Zalewski C."/>
            <person name="Makarova K.S."/>
            <person name="Aravind L."/>
            <person name="Daly M.J."/>
            <person name="Minton K.W."/>
            <person name="Fleischmann R.D."/>
            <person name="Ketchum K.A."/>
            <person name="Nelson K.E."/>
            <person name="Salzberg S.L."/>
            <person name="Smith H.O."/>
            <person name="Venter J.C."/>
            <person name="Fraser C.M."/>
        </authorList>
    </citation>
    <scope>NUCLEOTIDE SEQUENCE [LARGE SCALE GENOMIC DNA]</scope>
    <source>
        <strain>ATCC 13939 / DSM 20539 / JCM 16871 / CCUG 27074 / LMG 4051 / NBRC 15346 / NCIMB 9279 / VKM B-1422 / R1</strain>
    </source>
</reference>
<keyword id="KW-1185">Reference proteome</keyword>
<keyword id="KW-0687">Ribonucleoprotein</keyword>
<keyword id="KW-0689">Ribosomal protein</keyword>
<comment type="function">
    <text evidence="1">Involved in the binding of tRNA to the ribosomes.</text>
</comment>
<comment type="subunit">
    <text evidence="1">Part of the 30S ribosomal subunit.</text>
</comment>
<comment type="similarity">
    <text evidence="1">Belongs to the universal ribosomal protein uS10 family.</text>
</comment>
<sequence length="107" mass="12109">MVAPKIRIKLRGFDHKALDQSASKIVDTVRRTGADVSGPVPLPTRIRRFTVLRSPFKYKDSREHFEIRTHNRLVDIMNPTKKTIDSLMTLDLPTGVDIEIKTVGGRA</sequence>
<protein>
    <recommendedName>
        <fullName evidence="1">Small ribosomal subunit protein uS10</fullName>
    </recommendedName>
    <alternativeName>
        <fullName evidence="2">30S ribosomal protein S10</fullName>
    </alternativeName>
</protein>